<dbReference type="EMBL" id="AC123548">
    <property type="status" value="NOT_ANNOTATED_CDS"/>
    <property type="molecule type" value="Genomic_DNA"/>
</dbReference>
<dbReference type="EMBL" id="AC147612">
    <property type="status" value="NOT_ANNOTATED_CDS"/>
    <property type="molecule type" value="Genomic_DNA"/>
</dbReference>
<dbReference type="CCDS" id="CCDS71818.2"/>
<dbReference type="RefSeq" id="NP_001296375.1">
    <property type="nucleotide sequence ID" value="NM_001309446.1"/>
</dbReference>
<dbReference type="RefSeq" id="XP_006506569.1">
    <property type="nucleotide sequence ID" value="XM_006506506.5"/>
</dbReference>
<dbReference type="RefSeq" id="XP_006506570.1">
    <property type="nucleotide sequence ID" value="XM_006506507.5"/>
</dbReference>
<dbReference type="PDB" id="1WFF">
    <property type="method" value="NMR"/>
    <property type="chains" value="A=659-730"/>
</dbReference>
<dbReference type="PDBsum" id="1WFF"/>
<dbReference type="SMR" id="D3Z3C6"/>
<dbReference type="FunCoup" id="D3Z3C6">
    <property type="interactions" value="37"/>
</dbReference>
<dbReference type="STRING" id="10090.ENSMUSP00000108521"/>
<dbReference type="iPTMnet" id="D3Z3C6"/>
<dbReference type="PhosphoSitePlus" id="D3Z3C6"/>
<dbReference type="PaxDb" id="10090-ENSMUSP00000108521"/>
<dbReference type="Antibodypedia" id="27027">
    <property type="antibodies" value="36 antibodies from 12 providers"/>
</dbReference>
<dbReference type="Ensembl" id="ENSMUST00000036503.14">
    <property type="protein sequence ID" value="ENSMUSP00000040057.9"/>
    <property type="gene ID" value="ENSMUSG00000042213.19"/>
</dbReference>
<dbReference type="GeneID" id="67492"/>
<dbReference type="KEGG" id="mmu:67492"/>
<dbReference type="UCSC" id="uc012eqw.2">
    <property type="organism name" value="mouse"/>
</dbReference>
<dbReference type="AGR" id="MGI:1914742"/>
<dbReference type="CTD" id="93550"/>
<dbReference type="MGI" id="MGI:1914742">
    <property type="gene designation" value="Zfand4"/>
</dbReference>
<dbReference type="VEuPathDB" id="HostDB:ENSMUSG00000042213"/>
<dbReference type="eggNOG" id="KOG0001">
    <property type="taxonomic scope" value="Eukaryota"/>
</dbReference>
<dbReference type="eggNOG" id="KOG3173">
    <property type="taxonomic scope" value="Eukaryota"/>
</dbReference>
<dbReference type="GeneTree" id="ENSGT00940000155716"/>
<dbReference type="InParanoid" id="D3Z3C6"/>
<dbReference type="OrthoDB" id="40828at9989"/>
<dbReference type="BioGRID-ORCS" id="67492">
    <property type="hits" value="2 hits in 57 CRISPR screens"/>
</dbReference>
<dbReference type="ChiTaRS" id="Zfand4">
    <property type="organism name" value="mouse"/>
</dbReference>
<dbReference type="EvolutionaryTrace" id="D3Z3C6"/>
<dbReference type="PRO" id="PR:D3Z3C6"/>
<dbReference type="Proteomes" id="UP000000589">
    <property type="component" value="Chromosome 6"/>
</dbReference>
<dbReference type="RNAct" id="D3Z3C6">
    <property type="molecule type" value="protein"/>
</dbReference>
<dbReference type="Bgee" id="ENSMUSG00000042213">
    <property type="expression patterns" value="Expressed in spermatid and 201 other cell types or tissues"/>
</dbReference>
<dbReference type="ExpressionAtlas" id="D3Z3C6">
    <property type="expression patterns" value="baseline and differential"/>
</dbReference>
<dbReference type="GO" id="GO:0008270">
    <property type="term" value="F:zinc ion binding"/>
    <property type="evidence" value="ECO:0007669"/>
    <property type="project" value="UniProtKB-KW"/>
</dbReference>
<dbReference type="CDD" id="cd01802">
    <property type="entry name" value="Ubl_ZFAND4"/>
    <property type="match status" value="1"/>
</dbReference>
<dbReference type="Gene3D" id="4.10.1110.10">
    <property type="entry name" value="AN1-like Zinc finger"/>
    <property type="match status" value="1"/>
</dbReference>
<dbReference type="Gene3D" id="3.10.20.90">
    <property type="entry name" value="Phosphatidylinositol 3-kinase Catalytic Subunit, Chain A, domain 1"/>
    <property type="match status" value="1"/>
</dbReference>
<dbReference type="InterPro" id="IPR035896">
    <property type="entry name" value="AN1-like_Znf"/>
</dbReference>
<dbReference type="InterPro" id="IPR053061">
    <property type="entry name" value="AN1-type_zinc_finger"/>
</dbReference>
<dbReference type="InterPro" id="IPR000626">
    <property type="entry name" value="Ubiquitin-like_dom"/>
</dbReference>
<dbReference type="InterPro" id="IPR029071">
    <property type="entry name" value="Ubiquitin-like_domsf"/>
</dbReference>
<dbReference type="InterPro" id="IPR019956">
    <property type="entry name" value="Ubiquitin_dom"/>
</dbReference>
<dbReference type="InterPro" id="IPR000058">
    <property type="entry name" value="Znf_AN1"/>
</dbReference>
<dbReference type="PANTHER" id="PTHR46728">
    <property type="entry name" value="AN1-TYPE ZINC FINGER PROTEIN 4"/>
    <property type="match status" value="1"/>
</dbReference>
<dbReference type="PANTHER" id="PTHR46728:SF1">
    <property type="entry name" value="AN1-TYPE ZINC FINGER PROTEIN 4"/>
    <property type="match status" value="1"/>
</dbReference>
<dbReference type="Pfam" id="PF00240">
    <property type="entry name" value="ubiquitin"/>
    <property type="match status" value="1"/>
</dbReference>
<dbReference type="Pfam" id="PF01428">
    <property type="entry name" value="zf-AN1"/>
    <property type="match status" value="1"/>
</dbReference>
<dbReference type="PRINTS" id="PR00348">
    <property type="entry name" value="UBIQUITIN"/>
</dbReference>
<dbReference type="SMART" id="SM00213">
    <property type="entry name" value="UBQ"/>
    <property type="match status" value="1"/>
</dbReference>
<dbReference type="SMART" id="SM00154">
    <property type="entry name" value="ZnF_AN1"/>
    <property type="match status" value="1"/>
</dbReference>
<dbReference type="SUPFAM" id="SSF118310">
    <property type="entry name" value="AN1-like Zinc finger"/>
    <property type="match status" value="1"/>
</dbReference>
<dbReference type="SUPFAM" id="SSF54236">
    <property type="entry name" value="Ubiquitin-like"/>
    <property type="match status" value="1"/>
</dbReference>
<dbReference type="PROSITE" id="PS50053">
    <property type="entry name" value="UBIQUITIN_2"/>
    <property type="match status" value="1"/>
</dbReference>
<dbReference type="PROSITE" id="PS51039">
    <property type="entry name" value="ZF_AN1"/>
    <property type="match status" value="1"/>
</dbReference>
<sequence length="739" mass="81554">MFKADLGRIGIQLHTTYSRRIRKVKVMDNRKEPPFFNEDNVGPFYFKLPFYDTMELFIETLTGTCFELRVSPFEAVISVKGKIQRLEGIPICQQHLIWNNMELEDDYCLNDYNISEGCTLKLVLAMRGGPISTRKVPVEDPLRELAEYMDSSRDEVWEKTSCNKQVTFLVYREGDQLNFFRVVDRGDGTLTPLSESLSGSVYNLYTDEDEEAEPSPSGQQIIENSITMNKMKLLKAKMENMNLSKKPKKVVKVKPRPPLAPRPTSSSTAAARHRLLRVLPHIGQSCLPSGNAHLPETSRNAGPSPAAQAPADRPVSSLRNELLKDDDNWEINMLSHSTSSIRLLPQLTHIELESDKELADSVLHLGSSLSRRTKHLSGNLLSNNEDDVVLFPRSEECVADELLLPEVGAFAPFAEGTGAEQSSGVEGLGKVTPEFPLTKGDGGLRAAEQPLSHVARVLSSEPGDNAVLNHREPSSHKNRLLSPLLCAAPVSLHNSLVKPQRQSKCFESGNPSASTSQNTLRELDIRTIADSSFSRTARFRGVKVDSPGKRSDIISKVEARDITEMANKASKEPVGCVNNNGFLASLARSASRDSLQSTHGACRLRSSGIGLSTNFQHFQDENIRKSSPQSEPTDFFLSARGIGMSGSNAAAGKRIGESIHHLPPVKAPLQTKKKIMKHCFLCGKKTGLATSFECRCGNNFCASHRYAEAHGCTYDYKSAGRRYLEEANPVVNAPKLPKI</sequence>
<organism>
    <name type="scientific">Mus musculus</name>
    <name type="common">Mouse</name>
    <dbReference type="NCBI Taxonomy" id="10090"/>
    <lineage>
        <taxon>Eukaryota</taxon>
        <taxon>Metazoa</taxon>
        <taxon>Chordata</taxon>
        <taxon>Craniata</taxon>
        <taxon>Vertebrata</taxon>
        <taxon>Euteleostomi</taxon>
        <taxon>Mammalia</taxon>
        <taxon>Eutheria</taxon>
        <taxon>Euarchontoglires</taxon>
        <taxon>Glires</taxon>
        <taxon>Rodentia</taxon>
        <taxon>Myomorpha</taxon>
        <taxon>Muroidea</taxon>
        <taxon>Muridae</taxon>
        <taxon>Murinae</taxon>
        <taxon>Mus</taxon>
        <taxon>Mus</taxon>
    </lineage>
</organism>
<evidence type="ECO:0000255" key="1">
    <source>
        <dbReference type="PROSITE-ProRule" id="PRU00214"/>
    </source>
</evidence>
<evidence type="ECO:0000255" key="2">
    <source>
        <dbReference type="PROSITE-ProRule" id="PRU00449"/>
    </source>
</evidence>
<evidence type="ECO:0000256" key="3">
    <source>
        <dbReference type="SAM" id="MobiDB-lite"/>
    </source>
</evidence>
<evidence type="ECO:0007829" key="4">
    <source>
        <dbReference type="PDB" id="1WFF"/>
    </source>
</evidence>
<protein>
    <recommendedName>
        <fullName>AN1-type zinc finger protein 4</fullName>
    </recommendedName>
    <alternativeName>
        <fullName>AN1-type zinc finger and ubiquitin domain-containing protein-like 1</fullName>
    </alternativeName>
</protein>
<accession>D3Z3C6</accession>
<keyword id="KW-0002">3D-structure</keyword>
<keyword id="KW-0479">Metal-binding</keyword>
<keyword id="KW-1185">Reference proteome</keyword>
<keyword id="KW-0862">Zinc</keyword>
<keyword id="KW-0863">Zinc-finger</keyword>
<name>ZFAN4_MOUSE</name>
<gene>
    <name type="primary">Zfand4</name>
    <name type="synonym">Anubl1</name>
</gene>
<feature type="chain" id="PRO_0000416000" description="AN1-type zinc finger protein 4">
    <location>
        <begin position="1"/>
        <end position="739"/>
    </location>
</feature>
<feature type="domain" description="Ubiquitin-like" evidence="1">
    <location>
        <begin position="54"/>
        <end position="129"/>
    </location>
</feature>
<feature type="zinc finger region" description="AN1-type" evidence="2">
    <location>
        <begin position="673"/>
        <end position="720"/>
    </location>
</feature>
<feature type="region of interest" description="Disordered" evidence="3">
    <location>
        <begin position="246"/>
        <end position="270"/>
    </location>
</feature>
<feature type="region of interest" description="Disordered" evidence="3">
    <location>
        <begin position="287"/>
        <end position="316"/>
    </location>
</feature>
<feature type="compositionally biased region" description="Basic residues" evidence="3">
    <location>
        <begin position="246"/>
        <end position="255"/>
    </location>
</feature>
<feature type="binding site" evidence="2">
    <location>
        <position position="679"/>
    </location>
    <ligand>
        <name>Zn(2+)</name>
        <dbReference type="ChEBI" id="CHEBI:29105"/>
        <label>1</label>
    </ligand>
</feature>
<feature type="binding site" evidence="2">
    <location>
        <position position="682"/>
    </location>
    <ligand>
        <name>Zn(2+)</name>
        <dbReference type="ChEBI" id="CHEBI:29105"/>
        <label>1</label>
    </ligand>
</feature>
<feature type="binding site" evidence="2">
    <location>
        <position position="694"/>
    </location>
    <ligand>
        <name>Zn(2+)</name>
        <dbReference type="ChEBI" id="CHEBI:29105"/>
        <label>2</label>
    </ligand>
</feature>
<feature type="binding site" evidence="2">
    <location>
        <position position="696"/>
    </location>
    <ligand>
        <name>Zn(2+)</name>
        <dbReference type="ChEBI" id="CHEBI:29105"/>
        <label>2</label>
    </ligand>
</feature>
<feature type="binding site" evidence="2">
    <location>
        <position position="701"/>
    </location>
    <ligand>
        <name>Zn(2+)</name>
        <dbReference type="ChEBI" id="CHEBI:29105"/>
        <label>1</label>
    </ligand>
</feature>
<feature type="binding site" evidence="2">
    <location>
        <position position="704"/>
    </location>
    <ligand>
        <name>Zn(2+)</name>
        <dbReference type="ChEBI" id="CHEBI:29105"/>
        <label>1</label>
    </ligand>
</feature>
<feature type="binding site" evidence="2">
    <location>
        <position position="710"/>
    </location>
    <ligand>
        <name>Zn(2+)</name>
        <dbReference type="ChEBI" id="CHEBI:29105"/>
        <label>2</label>
    </ligand>
</feature>
<feature type="binding site" evidence="2">
    <location>
        <position position="712"/>
    </location>
    <ligand>
        <name>Zn(2+)</name>
        <dbReference type="ChEBI" id="CHEBI:29105"/>
        <label>2</label>
    </ligand>
</feature>
<feature type="strand" evidence="4">
    <location>
        <begin position="680"/>
        <end position="682"/>
    </location>
</feature>
<feature type="strand" evidence="4">
    <location>
        <begin position="687"/>
        <end position="690"/>
    </location>
</feature>
<feature type="turn" evidence="4">
    <location>
        <begin position="702"/>
        <end position="704"/>
    </location>
</feature>
<feature type="helix" evidence="4">
    <location>
        <begin position="708"/>
        <end position="710"/>
    </location>
</feature>
<feature type="strand" evidence="4">
    <location>
        <begin position="717"/>
        <end position="719"/>
    </location>
</feature>
<proteinExistence type="evidence at protein level"/>
<reference key="1">
    <citation type="journal article" date="2009" name="PLoS Biol.">
        <title>Lineage-specific biology revealed by a finished genome assembly of the mouse.</title>
        <authorList>
            <person name="Church D.M."/>
            <person name="Goodstadt L."/>
            <person name="Hillier L.W."/>
            <person name="Zody M.C."/>
            <person name="Goldstein S."/>
            <person name="She X."/>
            <person name="Bult C.J."/>
            <person name="Agarwala R."/>
            <person name="Cherry J.L."/>
            <person name="DiCuccio M."/>
            <person name="Hlavina W."/>
            <person name="Kapustin Y."/>
            <person name="Meric P."/>
            <person name="Maglott D."/>
            <person name="Birtle Z."/>
            <person name="Marques A.C."/>
            <person name="Graves T."/>
            <person name="Zhou S."/>
            <person name="Teague B."/>
            <person name="Potamousis K."/>
            <person name="Churas C."/>
            <person name="Place M."/>
            <person name="Herschleb J."/>
            <person name="Runnheim R."/>
            <person name="Forrest D."/>
            <person name="Amos-Landgraf J."/>
            <person name="Schwartz D.C."/>
            <person name="Cheng Z."/>
            <person name="Lindblad-Toh K."/>
            <person name="Eichler E.E."/>
            <person name="Ponting C.P."/>
        </authorList>
    </citation>
    <scope>NUCLEOTIDE SEQUENCE [LARGE SCALE GENOMIC DNA]</scope>
    <source>
        <strain>C57BL/6J</strain>
    </source>
</reference>